<comment type="function">
    <text evidence="1">Serine/threonine-protein kinase. Needed for the initiation of DNA synthesis during mitosis as well as for synaptonemal complex formation and commitment to recombination during meiosis (By similarity).</text>
</comment>
<comment type="catalytic activity">
    <reaction>
        <text>L-seryl-[protein] + ATP = O-phospho-L-seryl-[protein] + ADP + H(+)</text>
        <dbReference type="Rhea" id="RHEA:17989"/>
        <dbReference type="Rhea" id="RHEA-COMP:9863"/>
        <dbReference type="Rhea" id="RHEA-COMP:11604"/>
        <dbReference type="ChEBI" id="CHEBI:15378"/>
        <dbReference type="ChEBI" id="CHEBI:29999"/>
        <dbReference type="ChEBI" id="CHEBI:30616"/>
        <dbReference type="ChEBI" id="CHEBI:83421"/>
        <dbReference type="ChEBI" id="CHEBI:456216"/>
        <dbReference type="EC" id="2.7.11.1"/>
    </reaction>
</comment>
<comment type="catalytic activity">
    <reaction>
        <text>L-threonyl-[protein] + ATP = O-phospho-L-threonyl-[protein] + ADP + H(+)</text>
        <dbReference type="Rhea" id="RHEA:46608"/>
        <dbReference type="Rhea" id="RHEA-COMP:11060"/>
        <dbReference type="Rhea" id="RHEA-COMP:11605"/>
        <dbReference type="ChEBI" id="CHEBI:15378"/>
        <dbReference type="ChEBI" id="CHEBI:30013"/>
        <dbReference type="ChEBI" id="CHEBI:30616"/>
        <dbReference type="ChEBI" id="CHEBI:61977"/>
        <dbReference type="ChEBI" id="CHEBI:456216"/>
        <dbReference type="EC" id="2.7.11.1"/>
    </reaction>
</comment>
<comment type="cofactor">
    <cofactor evidence="1">
        <name>Mg(2+)</name>
        <dbReference type="ChEBI" id="CHEBI:18420"/>
    </cofactor>
</comment>
<comment type="similarity">
    <text evidence="2">Belongs to the protein kinase superfamily. Ser/Thr protein kinase family. CDC7 subfamily.</text>
</comment>
<name>CDC72_ENCCU</name>
<reference key="1">
    <citation type="journal article" date="2001" name="Nature">
        <title>Genome sequence and gene compaction of the eukaryote parasite Encephalitozoon cuniculi.</title>
        <authorList>
            <person name="Katinka M.D."/>
            <person name="Duprat S."/>
            <person name="Cornillot E."/>
            <person name="Metenier G."/>
            <person name="Thomarat F."/>
            <person name="Prensier G."/>
            <person name="Barbe V."/>
            <person name="Peyretaillade E."/>
            <person name="Brottier P."/>
            <person name="Wincker P."/>
            <person name="Delbac F."/>
            <person name="El Alaoui H."/>
            <person name="Peyret P."/>
            <person name="Saurin W."/>
            <person name="Gouy M."/>
            <person name="Weissenbach J."/>
            <person name="Vivares C.P."/>
        </authorList>
    </citation>
    <scope>NUCLEOTIDE SEQUENCE [LARGE SCALE GENOMIC DNA]</scope>
    <source>
        <strain>GB-M1</strain>
    </source>
</reference>
<reference key="2">
    <citation type="journal article" date="2007" name="BMC Genomics">
        <title>The complement of protein kinases of the microsporidium Encephalitozoon cuniculi in relation to those of Saccharomyces cerevisiae and Schizosaccharomyces pombe.</title>
        <authorList>
            <person name="Miranda-Saavedra D."/>
            <person name="Stark M.J.R."/>
            <person name="Packer J.C."/>
            <person name="Vivares C.P."/>
            <person name="Doerig C."/>
            <person name="Barton G.J."/>
        </authorList>
    </citation>
    <scope>PREDICTION OF FUNCTION</scope>
</reference>
<organism>
    <name type="scientific">Encephalitozoon cuniculi (strain GB-M1)</name>
    <name type="common">Microsporidian parasite</name>
    <dbReference type="NCBI Taxonomy" id="284813"/>
    <lineage>
        <taxon>Eukaryota</taxon>
        <taxon>Fungi</taxon>
        <taxon>Fungi incertae sedis</taxon>
        <taxon>Microsporidia</taxon>
        <taxon>Unikaryonidae</taxon>
        <taxon>Encephalitozoon</taxon>
    </lineage>
</organism>
<keyword id="KW-0067">ATP-binding</keyword>
<keyword id="KW-0131">Cell cycle</keyword>
<keyword id="KW-0132">Cell division</keyword>
<keyword id="KW-0418">Kinase</keyword>
<keyword id="KW-0460">Magnesium</keyword>
<keyword id="KW-0469">Meiosis</keyword>
<keyword id="KW-0479">Metal-binding</keyword>
<keyword id="KW-0498">Mitosis</keyword>
<keyword id="KW-0547">Nucleotide-binding</keyword>
<keyword id="KW-1185">Reference proteome</keyword>
<keyword id="KW-0723">Serine/threonine-protein kinase</keyword>
<keyword id="KW-0808">Transferase</keyword>
<accession>Q8SR83</accession>
<dbReference type="EC" id="2.7.11.1"/>
<dbReference type="EMBL" id="AL590449">
    <property type="protein sequence ID" value="CAD25731.1"/>
    <property type="molecule type" value="Genomic_DNA"/>
</dbReference>
<dbReference type="RefSeq" id="NP_586127.1">
    <property type="nucleotide sequence ID" value="NM_001041960.1"/>
</dbReference>
<dbReference type="SMR" id="Q8SR83"/>
<dbReference type="FunCoup" id="Q8SR83">
    <property type="interactions" value="142"/>
</dbReference>
<dbReference type="STRING" id="284813.Q8SR83"/>
<dbReference type="GeneID" id="859773"/>
<dbReference type="KEGG" id="ecu:ECU10_0120"/>
<dbReference type="VEuPathDB" id="MicrosporidiaDB:ECU10_0120"/>
<dbReference type="HOGENOM" id="CLU_000288_118_2_1"/>
<dbReference type="InParanoid" id="Q8SR83"/>
<dbReference type="OMA" id="NSTIETW"/>
<dbReference type="OrthoDB" id="10020333at2759"/>
<dbReference type="Proteomes" id="UP000000819">
    <property type="component" value="Chromosome X"/>
</dbReference>
<dbReference type="GO" id="GO:0005829">
    <property type="term" value="C:cytosol"/>
    <property type="evidence" value="ECO:0007669"/>
    <property type="project" value="TreeGrafter"/>
</dbReference>
<dbReference type="GO" id="GO:0005634">
    <property type="term" value="C:nucleus"/>
    <property type="evidence" value="ECO:0007669"/>
    <property type="project" value="TreeGrafter"/>
</dbReference>
<dbReference type="GO" id="GO:0005956">
    <property type="term" value="C:protein kinase CK2 complex"/>
    <property type="evidence" value="ECO:0007669"/>
    <property type="project" value="TreeGrafter"/>
</dbReference>
<dbReference type="GO" id="GO:0005524">
    <property type="term" value="F:ATP binding"/>
    <property type="evidence" value="ECO:0007669"/>
    <property type="project" value="UniProtKB-KW"/>
</dbReference>
<dbReference type="GO" id="GO:0046872">
    <property type="term" value="F:metal ion binding"/>
    <property type="evidence" value="ECO:0007669"/>
    <property type="project" value="UniProtKB-KW"/>
</dbReference>
<dbReference type="GO" id="GO:0106310">
    <property type="term" value="F:protein serine kinase activity"/>
    <property type="evidence" value="ECO:0007669"/>
    <property type="project" value="RHEA"/>
</dbReference>
<dbReference type="GO" id="GO:0004674">
    <property type="term" value="F:protein serine/threonine kinase activity"/>
    <property type="evidence" value="ECO:0007669"/>
    <property type="project" value="UniProtKB-KW"/>
</dbReference>
<dbReference type="GO" id="GO:0051301">
    <property type="term" value="P:cell division"/>
    <property type="evidence" value="ECO:0007669"/>
    <property type="project" value="UniProtKB-KW"/>
</dbReference>
<dbReference type="GO" id="GO:0051321">
    <property type="term" value="P:meiotic cell cycle"/>
    <property type="evidence" value="ECO:0007669"/>
    <property type="project" value="UniProtKB-KW"/>
</dbReference>
<dbReference type="GO" id="GO:0051726">
    <property type="term" value="P:regulation of cell cycle"/>
    <property type="evidence" value="ECO:0007669"/>
    <property type="project" value="TreeGrafter"/>
</dbReference>
<dbReference type="CDD" id="cd14019">
    <property type="entry name" value="STKc_Cdc7"/>
    <property type="match status" value="1"/>
</dbReference>
<dbReference type="Gene3D" id="3.30.200.20">
    <property type="entry name" value="Phosphorylase Kinase, domain 1"/>
    <property type="match status" value="1"/>
</dbReference>
<dbReference type="Gene3D" id="1.10.510.10">
    <property type="entry name" value="Transferase(Phosphotransferase) domain 1"/>
    <property type="match status" value="1"/>
</dbReference>
<dbReference type="InterPro" id="IPR045216">
    <property type="entry name" value="CK2_alpha"/>
</dbReference>
<dbReference type="InterPro" id="IPR011009">
    <property type="entry name" value="Kinase-like_dom_sf"/>
</dbReference>
<dbReference type="InterPro" id="IPR000719">
    <property type="entry name" value="Prot_kinase_dom"/>
</dbReference>
<dbReference type="InterPro" id="IPR017441">
    <property type="entry name" value="Protein_kinase_ATP_BS"/>
</dbReference>
<dbReference type="InterPro" id="IPR008271">
    <property type="entry name" value="Ser/Thr_kinase_AS"/>
</dbReference>
<dbReference type="PANTHER" id="PTHR24054">
    <property type="entry name" value="CASEIN KINASE II SUBUNIT ALPHA"/>
    <property type="match status" value="1"/>
</dbReference>
<dbReference type="PANTHER" id="PTHR24054:SF0">
    <property type="entry name" value="CASEIN KINASE II SUBUNIT ALPHA"/>
    <property type="match status" value="1"/>
</dbReference>
<dbReference type="Pfam" id="PF00069">
    <property type="entry name" value="Pkinase"/>
    <property type="match status" value="2"/>
</dbReference>
<dbReference type="SMART" id="SM00220">
    <property type="entry name" value="S_TKc"/>
    <property type="match status" value="1"/>
</dbReference>
<dbReference type="SUPFAM" id="SSF56112">
    <property type="entry name" value="Protein kinase-like (PK-like)"/>
    <property type="match status" value="1"/>
</dbReference>
<dbReference type="PROSITE" id="PS00107">
    <property type="entry name" value="PROTEIN_KINASE_ATP"/>
    <property type="match status" value="1"/>
</dbReference>
<dbReference type="PROSITE" id="PS50011">
    <property type="entry name" value="PROTEIN_KINASE_DOM"/>
    <property type="match status" value="1"/>
</dbReference>
<dbReference type="PROSITE" id="PS00108">
    <property type="entry name" value="PROTEIN_KINASE_ST"/>
    <property type="match status" value="1"/>
</dbReference>
<gene>
    <name type="primary">CDC7-2</name>
    <name type="ordered locus">ECU10_0120</name>
</gene>
<feature type="chain" id="PRO_0000384420" description="Probable cell division control protein 7 homolog 2">
    <location>
        <begin position="1"/>
        <end position="351"/>
    </location>
</feature>
<feature type="domain" description="Protein kinase" evidence="2">
    <location>
        <begin position="21"/>
        <end position="341"/>
    </location>
</feature>
<feature type="active site" description="Proton acceptor" evidence="2 3">
    <location>
        <position position="137"/>
    </location>
</feature>
<feature type="binding site" evidence="2">
    <location>
        <begin position="27"/>
        <end position="35"/>
    </location>
    <ligand>
        <name>ATP</name>
        <dbReference type="ChEBI" id="CHEBI:30616"/>
    </ligand>
</feature>
<feature type="binding site" evidence="2">
    <location>
        <position position="50"/>
    </location>
    <ligand>
        <name>ATP</name>
        <dbReference type="ChEBI" id="CHEBI:30616"/>
    </ligand>
</feature>
<proteinExistence type="inferred from homology"/>
<evidence type="ECO:0000250" key="1"/>
<evidence type="ECO:0000255" key="2">
    <source>
        <dbReference type="PROSITE-ProRule" id="PRU00159"/>
    </source>
</evidence>
<evidence type="ECO:0000255" key="3">
    <source>
        <dbReference type="PROSITE-ProRule" id="PRU10027"/>
    </source>
</evidence>
<protein>
    <recommendedName>
        <fullName>Probable cell division control protein 7 homolog 2</fullName>
        <ecNumber>2.7.11.1</ecNumber>
    </recommendedName>
</protein>
<sequence>MEEEKILESDLRHISFVMPKYTPIEKIGEGSFSVVYKALDAESGRYVALKAITRTSSPARVLDEMMFLKTLGGRKNCMGLLGCFRNEDQVVAVFPYFEPIDFREFISNANLADIKRYLHNLLIAIEHVHSNGIMHRDLKPGNFLYNKESGRGMLIDFGLAQYEEYSEGQHAEGGAKPAGPLLFFNSVVSKTKPPGYYERDGRPPMKAPRAGTRGFRAPEVLFRCQRQTGAIDMWSVGVIFLTILTTQYPFFYSSDDIDSIVEIATIFGHAEMRKAAKFYGRVWRSNIDSIPEERIPFETIVESLNPWAEVGSDGYDLLYRMLDLCSSSRITASDALSHPFFDDLKTHENCA</sequence>